<comment type="subcellular location">
    <subcellularLocation>
        <location>Secreted</location>
    </subcellularLocation>
</comment>
<comment type="alternative products">
    <event type="alternative splicing"/>
    <isoform>
        <id>Q9UKR0-1</id>
        <name>1</name>
        <sequence type="displayed"/>
    </isoform>
    <isoform>
        <id>Q9UKR0-2</id>
        <name>2</name>
        <sequence type="described" ref="VSP_005403"/>
    </isoform>
    <isoform>
        <id>Q9UKR0-3</id>
        <name>3</name>
        <sequence type="described" ref="VSP_045851 VSP_045852"/>
    </isoform>
</comment>
<comment type="similarity">
    <text evidence="3">Belongs to the peptidase S1 family. Kallikrein subfamily.</text>
</comment>
<dbReference type="EC" id="3.4.21.-"/>
<dbReference type="EMBL" id="AF135025">
    <property type="protein sequence ID" value="AAD26426.2"/>
    <property type="molecule type" value="Genomic_DNA"/>
</dbReference>
<dbReference type="EMBL" id="AF135025">
    <property type="protein sequence ID" value="AAF06065.1"/>
    <property type="molecule type" value="Genomic_DNA"/>
</dbReference>
<dbReference type="EMBL" id="AF135025">
    <property type="protein sequence ID" value="AAF06066.1"/>
    <property type="molecule type" value="Genomic_DNA"/>
</dbReference>
<dbReference type="EMBL" id="AF243527">
    <property type="protein sequence ID" value="AAG33365.1"/>
    <property type="molecule type" value="Genomic_DNA"/>
</dbReference>
<dbReference type="EMBL" id="AY358524">
    <property type="protein sequence ID" value="AAQ88888.1"/>
    <property type="molecule type" value="mRNA"/>
</dbReference>
<dbReference type="EMBL" id="AC011473">
    <property type="protein sequence ID" value="AAG23258.1"/>
    <property type="molecule type" value="Genomic_DNA"/>
</dbReference>
<dbReference type="EMBL" id="CH471135">
    <property type="protein sequence ID" value="EAW71976.1"/>
    <property type="molecule type" value="Genomic_DNA"/>
</dbReference>
<dbReference type="CCDS" id="CCDS12820.1">
    <molecule id="Q9UKR0-2"/>
</dbReference>
<dbReference type="CCDS" id="CCDS12821.1">
    <molecule id="Q9UKR0-1"/>
</dbReference>
<dbReference type="RefSeq" id="NP_001357054.1">
    <molecule id="Q9UKR0-1"/>
    <property type="nucleotide sequence ID" value="NM_001370125.1"/>
</dbReference>
<dbReference type="RefSeq" id="NP_062544.1">
    <molecule id="Q9UKR0-2"/>
    <property type="nucleotide sequence ID" value="NM_019598.3"/>
</dbReference>
<dbReference type="RefSeq" id="NP_665901.1">
    <molecule id="Q9UKR0-1"/>
    <property type="nucleotide sequence ID" value="NM_145894.2"/>
</dbReference>
<dbReference type="RefSeq" id="NP_665902.1">
    <property type="nucleotide sequence ID" value="NM_145895.1"/>
</dbReference>
<dbReference type="RefSeq" id="XP_005259008.1">
    <property type="nucleotide sequence ID" value="XM_005258951.3"/>
</dbReference>
<dbReference type="SMR" id="Q9UKR0"/>
<dbReference type="BioGRID" id="119064">
    <property type="interactions" value="27"/>
</dbReference>
<dbReference type="FunCoup" id="Q9UKR0">
    <property type="interactions" value="84"/>
</dbReference>
<dbReference type="IntAct" id="Q9UKR0">
    <property type="interactions" value="9"/>
</dbReference>
<dbReference type="STRING" id="9606.ENSP00000250351"/>
<dbReference type="BindingDB" id="Q9UKR0"/>
<dbReference type="ChEMBL" id="CHEMBL4943"/>
<dbReference type="MEROPS" id="S01.020"/>
<dbReference type="GlyCosmos" id="Q9UKR0">
    <property type="glycosylation" value="2 sites, No reported glycans"/>
</dbReference>
<dbReference type="GlyGen" id="Q9UKR0">
    <property type="glycosylation" value="2 sites"/>
</dbReference>
<dbReference type="iPTMnet" id="Q9UKR0"/>
<dbReference type="PhosphoSitePlus" id="Q9UKR0"/>
<dbReference type="BioMuta" id="KLK12"/>
<dbReference type="DMDM" id="9296989"/>
<dbReference type="jPOST" id="Q9UKR0"/>
<dbReference type="MassIVE" id="Q9UKR0"/>
<dbReference type="PaxDb" id="9606-ENSP00000250351"/>
<dbReference type="PeptideAtlas" id="Q9UKR0"/>
<dbReference type="PRIDE" id="Q9UKR0"/>
<dbReference type="ProteomicsDB" id="84837">
    <molecule id="Q9UKR0-1"/>
</dbReference>
<dbReference type="ProteomicsDB" id="84838">
    <molecule id="Q9UKR0-2"/>
</dbReference>
<dbReference type="ProteomicsDB" id="84839"/>
<dbReference type="Antibodypedia" id="18973">
    <property type="antibodies" value="141 antibodies from 29 providers"/>
</dbReference>
<dbReference type="DNASU" id="43849"/>
<dbReference type="Ensembl" id="ENST00000250351.4">
    <molecule id="Q9UKR0-2"/>
    <property type="protein sequence ID" value="ENSP00000250351.4"/>
    <property type="gene ID" value="ENSG00000186474.16"/>
</dbReference>
<dbReference type="Ensembl" id="ENST00000319590.8">
    <molecule id="Q9UKR0-1"/>
    <property type="protein sequence ID" value="ENSP00000324181.4"/>
    <property type="gene ID" value="ENSG00000186474.16"/>
</dbReference>
<dbReference type="Ensembl" id="ENST00000525263.5">
    <molecule id="Q9UKR0-1"/>
    <property type="protein sequence ID" value="ENSP00000436458.1"/>
    <property type="gene ID" value="ENSG00000186474.16"/>
</dbReference>
<dbReference type="Ensembl" id="ENST00000529888.5">
    <molecule id="Q9UKR0-3"/>
    <property type="protein sequence ID" value="ENSP00000434036.1"/>
    <property type="gene ID" value="ENSG00000186474.16"/>
</dbReference>
<dbReference type="Ensembl" id="ENST00000684732.1">
    <molecule id="Q9UKR0-1"/>
    <property type="protein sequence ID" value="ENSP00000508282.1"/>
    <property type="gene ID" value="ENSG00000186474.16"/>
</dbReference>
<dbReference type="GeneID" id="43849"/>
<dbReference type="KEGG" id="hsa:43849"/>
<dbReference type="MANE-Select" id="ENST00000684732.1">
    <property type="protein sequence ID" value="ENSP00000508282.1"/>
    <property type="RefSeq nucleotide sequence ID" value="NM_001370125.1"/>
    <property type="RefSeq protein sequence ID" value="NP_001357054.1"/>
</dbReference>
<dbReference type="UCSC" id="uc002pvg.1">
    <molecule id="Q9UKR0-1"/>
    <property type="organism name" value="human"/>
</dbReference>
<dbReference type="AGR" id="HGNC:6360"/>
<dbReference type="CTD" id="43849"/>
<dbReference type="DisGeNET" id="43849"/>
<dbReference type="GeneCards" id="KLK12"/>
<dbReference type="HGNC" id="HGNC:6360">
    <property type="gene designation" value="KLK12"/>
</dbReference>
<dbReference type="HPA" id="ENSG00000186474">
    <property type="expression patterns" value="Group enriched (cervix, esophagus, salivary gland, vagina)"/>
</dbReference>
<dbReference type="MIM" id="605539">
    <property type="type" value="gene"/>
</dbReference>
<dbReference type="neXtProt" id="NX_Q9UKR0"/>
<dbReference type="OpenTargets" id="ENSG00000186474"/>
<dbReference type="PharmGKB" id="PA30149"/>
<dbReference type="VEuPathDB" id="HostDB:ENSG00000186474"/>
<dbReference type="eggNOG" id="KOG3627">
    <property type="taxonomic scope" value="Eukaryota"/>
</dbReference>
<dbReference type="GeneTree" id="ENSGT01020000230389"/>
<dbReference type="HOGENOM" id="CLU_006842_1_1_1"/>
<dbReference type="InParanoid" id="Q9UKR0"/>
<dbReference type="OMA" id="TKCHVSG"/>
<dbReference type="OrthoDB" id="10059102at2759"/>
<dbReference type="PAN-GO" id="Q9UKR0">
    <property type="GO annotations" value="1 GO annotation based on evolutionary models"/>
</dbReference>
<dbReference type="PhylomeDB" id="Q9UKR0"/>
<dbReference type="TreeFam" id="TF331065"/>
<dbReference type="BRENDA" id="3.4.21.B43">
    <property type="organism ID" value="2681"/>
</dbReference>
<dbReference type="PathwayCommons" id="Q9UKR0"/>
<dbReference type="Reactome" id="R-HSA-6809371">
    <property type="pathway name" value="Formation of the cornified envelope"/>
</dbReference>
<dbReference type="BioGRID-ORCS" id="43849">
    <property type="hits" value="16 hits in 1139 CRISPR screens"/>
</dbReference>
<dbReference type="GeneWiki" id="KLK12"/>
<dbReference type="GenomeRNAi" id="43849"/>
<dbReference type="Pharos" id="Q9UKR0">
    <property type="development level" value="Tbio"/>
</dbReference>
<dbReference type="PRO" id="PR:Q9UKR0"/>
<dbReference type="Proteomes" id="UP000005640">
    <property type="component" value="Chromosome 19"/>
</dbReference>
<dbReference type="RNAct" id="Q9UKR0">
    <property type="molecule type" value="protein"/>
</dbReference>
<dbReference type="Bgee" id="ENSG00000186474">
    <property type="expression patterns" value="Expressed in lower esophagus mucosa and 102 other cell types or tissues"/>
</dbReference>
<dbReference type="ExpressionAtlas" id="Q9UKR0">
    <property type="expression patterns" value="baseline and differential"/>
</dbReference>
<dbReference type="GO" id="GO:0005576">
    <property type="term" value="C:extracellular region"/>
    <property type="evidence" value="ECO:0000304"/>
    <property type="project" value="Reactome"/>
</dbReference>
<dbReference type="GO" id="GO:0005615">
    <property type="term" value="C:extracellular space"/>
    <property type="evidence" value="ECO:0000318"/>
    <property type="project" value="GO_Central"/>
</dbReference>
<dbReference type="GO" id="GO:0030141">
    <property type="term" value="C:secretory granule"/>
    <property type="evidence" value="ECO:0000318"/>
    <property type="project" value="GO_Central"/>
</dbReference>
<dbReference type="GO" id="GO:0008233">
    <property type="term" value="F:peptidase activity"/>
    <property type="evidence" value="ECO:0000314"/>
    <property type="project" value="UniProtKB"/>
</dbReference>
<dbReference type="GO" id="GO:0004252">
    <property type="term" value="F:serine-type endopeptidase activity"/>
    <property type="evidence" value="ECO:0000318"/>
    <property type="project" value="GO_Central"/>
</dbReference>
<dbReference type="GO" id="GO:0008236">
    <property type="term" value="F:serine-type peptidase activity"/>
    <property type="evidence" value="ECO:0000314"/>
    <property type="project" value="UniProtKB"/>
</dbReference>
<dbReference type="GO" id="GO:0051604">
    <property type="term" value="P:protein maturation"/>
    <property type="evidence" value="ECO:0000318"/>
    <property type="project" value="GO_Central"/>
</dbReference>
<dbReference type="GO" id="GO:0006508">
    <property type="term" value="P:proteolysis"/>
    <property type="evidence" value="ECO:0000314"/>
    <property type="project" value="UniProtKB"/>
</dbReference>
<dbReference type="CDD" id="cd00190">
    <property type="entry name" value="Tryp_SPc"/>
    <property type="match status" value="1"/>
</dbReference>
<dbReference type="FunFam" id="2.40.10.10:FF:000095">
    <property type="entry name" value="Kallikrein related-peptidase 12"/>
    <property type="match status" value="1"/>
</dbReference>
<dbReference type="FunFam" id="2.40.10.10:FF:000136">
    <property type="entry name" value="Kallikrein related-peptidase 12"/>
    <property type="match status" value="1"/>
</dbReference>
<dbReference type="Gene3D" id="2.40.10.10">
    <property type="entry name" value="Trypsin-like serine proteases"/>
    <property type="match status" value="2"/>
</dbReference>
<dbReference type="InterPro" id="IPR009003">
    <property type="entry name" value="Peptidase_S1_PA"/>
</dbReference>
<dbReference type="InterPro" id="IPR043504">
    <property type="entry name" value="Peptidase_S1_PA_chymotrypsin"/>
</dbReference>
<dbReference type="InterPro" id="IPR001314">
    <property type="entry name" value="Peptidase_S1A"/>
</dbReference>
<dbReference type="InterPro" id="IPR001254">
    <property type="entry name" value="Trypsin_dom"/>
</dbReference>
<dbReference type="InterPro" id="IPR018114">
    <property type="entry name" value="TRYPSIN_HIS"/>
</dbReference>
<dbReference type="InterPro" id="IPR033116">
    <property type="entry name" value="TRYPSIN_SER"/>
</dbReference>
<dbReference type="PANTHER" id="PTHR24271:SF63">
    <property type="entry name" value="KALLIKREIN-12"/>
    <property type="match status" value="1"/>
</dbReference>
<dbReference type="PANTHER" id="PTHR24271">
    <property type="entry name" value="KALLIKREIN-RELATED"/>
    <property type="match status" value="1"/>
</dbReference>
<dbReference type="Pfam" id="PF00089">
    <property type="entry name" value="Trypsin"/>
    <property type="match status" value="1"/>
</dbReference>
<dbReference type="PRINTS" id="PR00722">
    <property type="entry name" value="CHYMOTRYPSIN"/>
</dbReference>
<dbReference type="SMART" id="SM00020">
    <property type="entry name" value="Tryp_SPc"/>
    <property type="match status" value="1"/>
</dbReference>
<dbReference type="SUPFAM" id="SSF50494">
    <property type="entry name" value="Trypsin-like serine proteases"/>
    <property type="match status" value="1"/>
</dbReference>
<dbReference type="PROSITE" id="PS50240">
    <property type="entry name" value="TRYPSIN_DOM"/>
    <property type="match status" value="1"/>
</dbReference>
<dbReference type="PROSITE" id="PS00134">
    <property type="entry name" value="TRYPSIN_HIS"/>
    <property type="match status" value="1"/>
</dbReference>
<dbReference type="PROSITE" id="PS00135">
    <property type="entry name" value="TRYPSIN_SER"/>
    <property type="match status" value="1"/>
</dbReference>
<keyword id="KW-0025">Alternative splicing</keyword>
<keyword id="KW-1015">Disulfide bond</keyword>
<keyword id="KW-0325">Glycoprotein</keyword>
<keyword id="KW-0378">Hydrolase</keyword>
<keyword id="KW-0645">Protease</keyword>
<keyword id="KW-1267">Proteomics identification</keyword>
<keyword id="KW-1185">Reference proteome</keyword>
<keyword id="KW-0964">Secreted</keyword>
<keyword id="KW-0720">Serine protease</keyword>
<keyword id="KW-0732">Signal</keyword>
<accession>Q9UKR0</accession>
<accession>Q9UKR1</accession>
<accession>Q9UKR2</accession>
<evidence type="ECO:0000250" key="1"/>
<evidence type="ECO:0000255" key="2"/>
<evidence type="ECO:0000255" key="3">
    <source>
        <dbReference type="PROSITE-ProRule" id="PRU00274"/>
    </source>
</evidence>
<evidence type="ECO:0000269" key="4">
    <source>
    </source>
</evidence>
<evidence type="ECO:0000305" key="5"/>
<name>KLK12_HUMAN</name>
<protein>
    <recommendedName>
        <fullName>Kallikrein-12</fullName>
        <ecNumber>3.4.21.-</ecNumber>
    </recommendedName>
    <alternativeName>
        <fullName>Kallikrein-like protein 5</fullName>
        <shortName>KLK-L5</shortName>
    </alternativeName>
</protein>
<sequence>MGLSIFLLLCVLGLSQAATPKIFNGTECGRNSQPWQVGLFEGTSLRCGGVLIDHRWVLTAAHCSGSRYWVRLGEHSLSQLDWTEQIRHSGFSVTHPGYLGASTSHEHDLRLLRLRLPVRVTSSVQPLPLPNDCATAGTECHVSGWGITNHPRNPFPDLLQCLNLSIVSHATCHGVYPGRITSNMVCAGGVPGQDACQGDSGGPLVCGGVLQGLVSWGSVGPCGQDGIPGVYTYICKYVDWIRMIMRNN</sequence>
<organism>
    <name type="scientific">Homo sapiens</name>
    <name type="common">Human</name>
    <dbReference type="NCBI Taxonomy" id="9606"/>
    <lineage>
        <taxon>Eukaryota</taxon>
        <taxon>Metazoa</taxon>
        <taxon>Chordata</taxon>
        <taxon>Craniata</taxon>
        <taxon>Vertebrata</taxon>
        <taxon>Euteleostomi</taxon>
        <taxon>Mammalia</taxon>
        <taxon>Eutheria</taxon>
        <taxon>Euarchontoglires</taxon>
        <taxon>Primates</taxon>
        <taxon>Haplorrhini</taxon>
        <taxon>Catarrhini</taxon>
        <taxon>Hominidae</taxon>
        <taxon>Homo</taxon>
    </lineage>
</organism>
<gene>
    <name type="primary">KLK12</name>
    <name type="synonym">KLKL5</name>
    <name type="ORF">UNQ669/PRO1303</name>
</gene>
<feature type="signal peptide" evidence="2">
    <location>
        <begin position="1"/>
        <end position="17"/>
    </location>
</feature>
<feature type="chain" id="PRO_0000027956" description="Kallikrein-12">
    <location>
        <begin position="18"/>
        <end position="248"/>
    </location>
</feature>
<feature type="domain" description="Peptidase S1" evidence="3">
    <location>
        <begin position="22"/>
        <end position="246"/>
    </location>
</feature>
<feature type="active site" description="Charge relay system" evidence="1">
    <location>
        <position position="62"/>
    </location>
</feature>
<feature type="active site" description="Charge relay system" evidence="1">
    <location>
        <position position="108"/>
    </location>
</feature>
<feature type="active site" description="Charge relay system" evidence="1">
    <location>
        <position position="200"/>
    </location>
</feature>
<feature type="glycosylation site" description="N-linked (GlcNAc...) asparagine" evidence="4">
    <location>
        <position position="24"/>
    </location>
</feature>
<feature type="glycosylation site" description="N-linked (GlcNAc...) asparagine" evidence="2">
    <location>
        <position position="163"/>
    </location>
</feature>
<feature type="disulfide bond" evidence="3">
    <location>
        <begin position="28"/>
        <end position="161"/>
    </location>
</feature>
<feature type="disulfide bond" evidence="3">
    <location>
        <begin position="47"/>
        <end position="63"/>
    </location>
</feature>
<feature type="disulfide bond" evidence="3">
    <location>
        <begin position="133"/>
        <end position="235"/>
    </location>
</feature>
<feature type="disulfide bond" evidence="3">
    <location>
        <begin position="140"/>
        <end position="206"/>
    </location>
</feature>
<feature type="disulfide bond" evidence="3">
    <location>
        <begin position="172"/>
        <end position="186"/>
    </location>
</feature>
<feature type="disulfide bond" evidence="3">
    <location>
        <begin position="196"/>
        <end position="222"/>
    </location>
</feature>
<feature type="splice variant" id="VSP_045851" description="In isoform 3." evidence="5">
    <original>SRYWVRLGEHSLSQLDWTEQIRHSGFSVTHPGYLGASTSHEHDLRL</original>
    <variation>RPIPGSAPVPQPLHRLPCHLPWCVSRENHEQHGVCRRRPGAGCLPG</variation>
    <location>
        <begin position="66"/>
        <end position="111"/>
    </location>
</feature>
<feature type="splice variant" id="VSP_045852" description="In isoform 3." evidence="5">
    <location>
        <begin position="112"/>
        <end position="248"/>
    </location>
</feature>
<feature type="splice variant" id="VSP_005403" description="In isoform 2." evidence="5">
    <original>KYVDWIRMIMRNN</original>
    <variation>NSTLVGLGTSWNFNSCQPF</variation>
    <location>
        <begin position="236"/>
        <end position="248"/>
    </location>
</feature>
<reference key="1">
    <citation type="journal article" date="1999" name="Anticancer Res.">
        <title>Identification of novel human kallikrein-like genes on chromosome 19q13.3-q13.4.</title>
        <authorList>
            <person name="Yousef G.M."/>
            <person name="Luo L.-Y."/>
            <person name="Diamandis E.P."/>
        </authorList>
    </citation>
    <scope>NUCLEOTIDE SEQUENCE [GENOMIC DNA] (ISOFORM 1)</scope>
</reference>
<reference key="2">
    <citation type="submission" date="1999-11" db="EMBL/GenBank/DDBJ databases">
        <title>Cloning of new alternatively spliced forms of the kallikrein-like gene 5 (KLK-L5).</title>
        <authorList>
            <person name="Yousef G.M."/>
            <person name="Magklara A."/>
            <person name="Scorilas A."/>
            <person name="Diamandis E.P."/>
        </authorList>
    </citation>
    <scope>NUCLEOTIDE SEQUENCE [GENOMIC DNA] (ISOFORMS 1 AND 2)</scope>
</reference>
<reference key="3">
    <citation type="journal article" date="2000" name="Trends Endocrinol. Metab.">
        <title>The new human kallikrein gene family: implications in carcinogenesis.</title>
        <authorList>
            <person name="Diamandis E.P."/>
            <person name="Yousef G.M."/>
            <person name="Luo L.Y."/>
            <person name="Magklara A."/>
            <person name="Obiezu C.V."/>
        </authorList>
    </citation>
    <scope>NUCLEOTIDE SEQUENCE [GENOMIC DNA] (ISOFORM 3)</scope>
</reference>
<reference key="4">
    <citation type="journal article" date="2000" name="Gene">
        <title>Sequencing and expression analysis of the serine protease gene cluster located in chromosome 19q13 region.</title>
        <authorList>
            <person name="Gan L."/>
            <person name="Lee I."/>
            <person name="Smith R."/>
            <person name="Argonza-Barrett R."/>
            <person name="Lei H."/>
            <person name="McCuaig J."/>
            <person name="Moss P."/>
            <person name="Paeper B."/>
            <person name="Wang K."/>
        </authorList>
    </citation>
    <scope>NUCLEOTIDE SEQUENCE [GENOMIC DNA] (ISOFORM 1)</scope>
</reference>
<reference key="5">
    <citation type="journal article" date="2003" name="Genome Res.">
        <title>The secreted protein discovery initiative (SPDI), a large-scale effort to identify novel human secreted and transmembrane proteins: a bioinformatics assessment.</title>
        <authorList>
            <person name="Clark H.F."/>
            <person name="Gurney A.L."/>
            <person name="Abaya E."/>
            <person name="Baker K."/>
            <person name="Baldwin D.T."/>
            <person name="Brush J."/>
            <person name="Chen J."/>
            <person name="Chow B."/>
            <person name="Chui C."/>
            <person name="Crowley C."/>
            <person name="Currell B."/>
            <person name="Deuel B."/>
            <person name="Dowd P."/>
            <person name="Eaton D."/>
            <person name="Foster J.S."/>
            <person name="Grimaldi C."/>
            <person name="Gu Q."/>
            <person name="Hass P.E."/>
            <person name="Heldens S."/>
            <person name="Huang A."/>
            <person name="Kim H.S."/>
            <person name="Klimowski L."/>
            <person name="Jin Y."/>
            <person name="Johnson S."/>
            <person name="Lee J."/>
            <person name="Lewis L."/>
            <person name="Liao D."/>
            <person name="Mark M.R."/>
            <person name="Robbie E."/>
            <person name="Sanchez C."/>
            <person name="Schoenfeld J."/>
            <person name="Seshagiri S."/>
            <person name="Simmons L."/>
            <person name="Singh J."/>
            <person name="Smith V."/>
            <person name="Stinson J."/>
            <person name="Vagts A."/>
            <person name="Vandlen R.L."/>
            <person name="Watanabe C."/>
            <person name="Wieand D."/>
            <person name="Woods K."/>
            <person name="Xie M.-H."/>
            <person name="Yansura D.G."/>
            <person name="Yi S."/>
            <person name="Yu G."/>
            <person name="Yuan J."/>
            <person name="Zhang M."/>
            <person name="Zhang Z."/>
            <person name="Goddard A.D."/>
            <person name="Wood W.I."/>
            <person name="Godowski P.J."/>
            <person name="Gray A.M."/>
        </authorList>
    </citation>
    <scope>NUCLEOTIDE SEQUENCE [LARGE SCALE MRNA] (ISOFORM 1)</scope>
</reference>
<reference key="6">
    <citation type="journal article" date="2004" name="Nature">
        <title>The DNA sequence and biology of human chromosome 19.</title>
        <authorList>
            <person name="Grimwood J."/>
            <person name="Gordon L.A."/>
            <person name="Olsen A.S."/>
            <person name="Terry A."/>
            <person name="Schmutz J."/>
            <person name="Lamerdin J.E."/>
            <person name="Hellsten U."/>
            <person name="Goodstein D."/>
            <person name="Couronne O."/>
            <person name="Tran-Gyamfi M."/>
            <person name="Aerts A."/>
            <person name="Altherr M."/>
            <person name="Ashworth L."/>
            <person name="Bajorek E."/>
            <person name="Black S."/>
            <person name="Branscomb E."/>
            <person name="Caenepeel S."/>
            <person name="Carrano A.V."/>
            <person name="Caoile C."/>
            <person name="Chan Y.M."/>
            <person name="Christensen M."/>
            <person name="Cleland C.A."/>
            <person name="Copeland A."/>
            <person name="Dalin E."/>
            <person name="Dehal P."/>
            <person name="Denys M."/>
            <person name="Detter J.C."/>
            <person name="Escobar J."/>
            <person name="Flowers D."/>
            <person name="Fotopulos D."/>
            <person name="Garcia C."/>
            <person name="Georgescu A.M."/>
            <person name="Glavina T."/>
            <person name="Gomez M."/>
            <person name="Gonzales E."/>
            <person name="Groza M."/>
            <person name="Hammon N."/>
            <person name="Hawkins T."/>
            <person name="Haydu L."/>
            <person name="Ho I."/>
            <person name="Huang W."/>
            <person name="Israni S."/>
            <person name="Jett J."/>
            <person name="Kadner K."/>
            <person name="Kimball H."/>
            <person name="Kobayashi A."/>
            <person name="Larionov V."/>
            <person name="Leem S.-H."/>
            <person name="Lopez F."/>
            <person name="Lou Y."/>
            <person name="Lowry S."/>
            <person name="Malfatti S."/>
            <person name="Martinez D."/>
            <person name="McCready P.M."/>
            <person name="Medina C."/>
            <person name="Morgan J."/>
            <person name="Nelson K."/>
            <person name="Nolan M."/>
            <person name="Ovcharenko I."/>
            <person name="Pitluck S."/>
            <person name="Pollard M."/>
            <person name="Popkie A.P."/>
            <person name="Predki P."/>
            <person name="Quan G."/>
            <person name="Ramirez L."/>
            <person name="Rash S."/>
            <person name="Retterer J."/>
            <person name="Rodriguez A."/>
            <person name="Rogers S."/>
            <person name="Salamov A."/>
            <person name="Salazar A."/>
            <person name="She X."/>
            <person name="Smith D."/>
            <person name="Slezak T."/>
            <person name="Solovyev V."/>
            <person name="Thayer N."/>
            <person name="Tice H."/>
            <person name="Tsai M."/>
            <person name="Ustaszewska A."/>
            <person name="Vo N."/>
            <person name="Wagner M."/>
            <person name="Wheeler J."/>
            <person name="Wu K."/>
            <person name="Xie G."/>
            <person name="Yang J."/>
            <person name="Dubchak I."/>
            <person name="Furey T.S."/>
            <person name="DeJong P."/>
            <person name="Dickson M."/>
            <person name="Gordon D."/>
            <person name="Eichler E.E."/>
            <person name="Pennacchio L.A."/>
            <person name="Richardson P."/>
            <person name="Stubbs L."/>
            <person name="Rokhsar D.S."/>
            <person name="Myers R.M."/>
            <person name="Rubin E.M."/>
            <person name="Lucas S.M."/>
        </authorList>
    </citation>
    <scope>NUCLEOTIDE SEQUENCE [LARGE SCALE GENOMIC DNA]</scope>
</reference>
<reference key="7">
    <citation type="submission" date="2005-07" db="EMBL/GenBank/DDBJ databases">
        <authorList>
            <person name="Mural R.J."/>
            <person name="Istrail S."/>
            <person name="Sutton G."/>
            <person name="Florea L."/>
            <person name="Halpern A.L."/>
            <person name="Mobarry C.M."/>
            <person name="Lippert R."/>
            <person name="Walenz B."/>
            <person name="Shatkay H."/>
            <person name="Dew I."/>
            <person name="Miller J.R."/>
            <person name="Flanigan M.J."/>
            <person name="Edwards N.J."/>
            <person name="Bolanos R."/>
            <person name="Fasulo D."/>
            <person name="Halldorsson B.V."/>
            <person name="Hannenhalli S."/>
            <person name="Turner R."/>
            <person name="Yooseph S."/>
            <person name="Lu F."/>
            <person name="Nusskern D.R."/>
            <person name="Shue B.C."/>
            <person name="Zheng X.H."/>
            <person name="Zhong F."/>
            <person name="Delcher A.L."/>
            <person name="Huson D.H."/>
            <person name="Kravitz S.A."/>
            <person name="Mouchard L."/>
            <person name="Reinert K."/>
            <person name="Remington K.A."/>
            <person name="Clark A.G."/>
            <person name="Waterman M.S."/>
            <person name="Eichler E.E."/>
            <person name="Adams M.D."/>
            <person name="Hunkapiller M.W."/>
            <person name="Myers E.W."/>
            <person name="Venter J.C."/>
        </authorList>
    </citation>
    <scope>NUCLEOTIDE SEQUENCE [LARGE SCALE GENOMIC DNA]</scope>
</reference>
<reference key="8">
    <citation type="journal article" date="2008" name="Proteomics">
        <title>Identification of N-linked glycoproteins in human milk by hydrophilic interaction liquid chromatography and mass spectrometry.</title>
        <authorList>
            <person name="Picariello G."/>
            <person name="Ferranti P."/>
            <person name="Mamone G."/>
            <person name="Roepstorff P."/>
            <person name="Addeo F."/>
        </authorList>
    </citation>
    <scope>GLYCOSYLATION [LARGE SCALE ANALYSIS] AT ASN-24</scope>
    <source>
        <tissue>Milk</tissue>
    </source>
</reference>
<proteinExistence type="evidence at protein level"/>